<organism>
    <name type="scientific">Saccharolobus solfataricus (strain ATCC 35092 / DSM 1617 / JCM 11322 / P2)</name>
    <name type="common">Sulfolobus solfataricus</name>
    <dbReference type="NCBI Taxonomy" id="273057"/>
    <lineage>
        <taxon>Archaea</taxon>
        <taxon>Thermoproteota</taxon>
        <taxon>Thermoprotei</taxon>
        <taxon>Sulfolobales</taxon>
        <taxon>Sulfolobaceae</taxon>
        <taxon>Saccharolobus</taxon>
    </lineage>
</organism>
<name>RGYR2_SACS2</name>
<gene>
    <name evidence="1" type="primary">rgy2</name>
    <name evidence="11 13 14" type="synonym">topR-2</name>
    <name type="ordered locus">SSO0963</name>
</gene>
<evidence type="ECO:0000255" key="1">
    <source>
        <dbReference type="HAMAP-Rule" id="MF_01125"/>
    </source>
</evidence>
<evidence type="ECO:0000255" key="2">
    <source>
        <dbReference type="PROSITE-ProRule" id="PRU01380"/>
    </source>
</evidence>
<evidence type="ECO:0000255" key="3">
    <source>
        <dbReference type="PROSITE-ProRule" id="PRU01381"/>
    </source>
</evidence>
<evidence type="ECO:0000255" key="4">
    <source>
        <dbReference type="PROSITE-ProRule" id="PRU01383"/>
    </source>
</evidence>
<evidence type="ECO:0000269" key="5">
    <source>
    </source>
</evidence>
<evidence type="ECO:0000269" key="6">
    <source>
    </source>
</evidence>
<evidence type="ECO:0000269" key="7">
    <source>
    </source>
</evidence>
<evidence type="ECO:0000269" key="8">
    <source>
    </source>
</evidence>
<evidence type="ECO:0000269" key="9">
    <source>
    </source>
</evidence>
<evidence type="ECO:0000269" key="10">
    <source>
    </source>
</evidence>
<evidence type="ECO:0000303" key="11">
    <source>
    </source>
</evidence>
<evidence type="ECO:0000303" key="12">
    <source>
    </source>
</evidence>
<evidence type="ECO:0000303" key="13">
    <source>
    </source>
</evidence>
<evidence type="ECO:0000303" key="14">
    <source>
    </source>
</evidence>
<evidence type="ECO:0000303" key="15">
    <source>
    </source>
</evidence>
<evidence type="ECO:0000303" key="16">
    <source>
    </source>
</evidence>
<evidence type="ECO:0000305" key="17"/>
<evidence type="ECO:0000305" key="18">
    <source>
    </source>
</evidence>
<evidence type="ECO:0000305" key="19">
    <source>
    </source>
</evidence>
<evidence type="ECO:0000305" key="20">
    <source>
    </source>
</evidence>
<feature type="chain" id="PRO_0000158093" description="Reverse gyrase 2">
    <location>
        <begin position="1"/>
        <end position="1166"/>
    </location>
</feature>
<feature type="domain" description="Helicase ATP-binding" evidence="1">
    <location>
        <begin position="96"/>
        <end position="285"/>
    </location>
</feature>
<feature type="domain" description="Toprim" evidence="1">
    <location>
        <begin position="580"/>
        <end position="743"/>
    </location>
</feature>
<feature type="domain" description="Topo IA-type catalytic" evidence="4">
    <location>
        <begin position="759"/>
        <end position="1157"/>
    </location>
</feature>
<feature type="zinc finger region" description="RG N-terminal-type" evidence="2">
    <location>
        <begin position="1"/>
        <end position="40"/>
    </location>
</feature>
<feature type="zinc finger region" description="RG C-terminal-type" evidence="3">
    <location>
        <begin position="662"/>
        <end position="689"/>
    </location>
</feature>
<feature type="region of interest" description="Topoisomerase I" evidence="1">
    <location>
        <begin position="576"/>
        <end position="1166"/>
    </location>
</feature>
<feature type="short sequence motif" description="DEAD box" evidence="1">
    <location>
        <begin position="190"/>
        <end position="193"/>
    </location>
</feature>
<feature type="active site" description="O-(5'-phospho-DNA)-tyrosine intermediate" evidence="4 20">
    <location>
        <position position="903"/>
    </location>
</feature>
<feature type="binding site" evidence="1">
    <location>
        <position position="10"/>
    </location>
    <ligand>
        <name>Zn(2+)</name>
        <dbReference type="ChEBI" id="CHEBI:29105"/>
        <label>1</label>
    </ligand>
</feature>
<feature type="binding site" evidence="1">
    <location>
        <position position="13"/>
    </location>
    <ligand>
        <name>Zn(2+)</name>
        <dbReference type="ChEBI" id="CHEBI:29105"/>
        <label>1</label>
    </ligand>
</feature>
<feature type="binding site" evidence="1">
    <location>
        <position position="28"/>
    </location>
    <ligand>
        <name>Zn(2+)</name>
        <dbReference type="ChEBI" id="CHEBI:29105"/>
        <label>1</label>
    </ligand>
</feature>
<feature type="binding site" evidence="1">
    <location>
        <position position="31"/>
    </location>
    <ligand>
        <name>Zn(2+)</name>
        <dbReference type="ChEBI" id="CHEBI:29105"/>
        <label>1</label>
    </ligand>
</feature>
<feature type="binding site" evidence="1">
    <location>
        <position position="92"/>
    </location>
    <ligand>
        <name>ATP</name>
        <dbReference type="ChEBI" id="CHEBI:30616"/>
    </ligand>
</feature>
<feature type="binding site" evidence="1">
    <location>
        <begin position="109"/>
        <end position="116"/>
    </location>
    <ligand>
        <name>ATP</name>
        <dbReference type="ChEBI" id="CHEBI:30616"/>
    </ligand>
</feature>
<feature type="binding site" evidence="1">
    <location>
        <position position="586"/>
    </location>
    <ligand>
        <name>Mg(2+)</name>
        <dbReference type="ChEBI" id="CHEBI:18420"/>
        <note>catalytic</note>
    </ligand>
</feature>
<feature type="binding site" evidence="1">
    <location>
        <position position="665"/>
    </location>
    <ligand>
        <name>Zn(2+)</name>
        <dbReference type="ChEBI" id="CHEBI:29105"/>
        <label>2</label>
    </ligand>
</feature>
<feature type="binding site" evidence="1">
    <location>
        <position position="668"/>
    </location>
    <ligand>
        <name>Zn(2+)</name>
        <dbReference type="ChEBI" id="CHEBI:29105"/>
        <label>2</label>
    </ligand>
</feature>
<feature type="binding site" evidence="1">
    <location>
        <position position="679"/>
    </location>
    <ligand>
        <name>Zn(2+)</name>
        <dbReference type="ChEBI" id="CHEBI:29105"/>
        <label>2</label>
    </ligand>
</feature>
<feature type="binding site" evidence="1">
    <location>
        <position position="682"/>
    </location>
    <ligand>
        <name>Zn(2+)</name>
        <dbReference type="ChEBI" id="CHEBI:29105"/>
        <label>2</label>
    </ligand>
</feature>
<feature type="binding site" evidence="1">
    <location>
        <position position="712"/>
    </location>
    <ligand>
        <name>Mg(2+)</name>
        <dbReference type="ChEBI" id="CHEBI:18420"/>
        <note>catalytic</note>
    </ligand>
</feature>
<feature type="mutagenesis site" description="Binds but cannot cleave DNA." evidence="10">
    <original>Y</original>
    <variation>F</variation>
    <location>
        <position position="903"/>
    </location>
</feature>
<proteinExistence type="evidence at protein level"/>
<accession>Q97ZF5</accession>
<keyword id="KW-0067">ATP-binding</keyword>
<keyword id="KW-0963">Cytoplasm</keyword>
<keyword id="KW-0238">DNA-binding</keyword>
<keyword id="KW-0413">Isomerase</keyword>
<keyword id="KW-0460">Magnesium</keyword>
<keyword id="KW-0479">Metal-binding</keyword>
<keyword id="KW-0547">Nucleotide-binding</keyword>
<keyword id="KW-1185">Reference proteome</keyword>
<keyword id="KW-0677">Repeat</keyword>
<keyword id="KW-0799">Topoisomerase</keyword>
<keyword id="KW-0862">Zinc</keyword>
<keyword id="KW-0863">Zinc-finger</keyword>
<protein>
    <recommendedName>
        <fullName evidence="1 12">Reverse gyrase 2</fullName>
        <shortName evidence="16">RG2</shortName>
        <ecNumber evidence="1 8 9 10">5.6.2.-</ecNumber>
    </recommendedName>
    <alternativeName>
        <fullName evidence="15">TopR2</fullName>
    </alternativeName>
</protein>
<sequence length="1166" mass="132077">MINVMYKNSCPNCGGDISGDRLLNGLPCEACLPYINGIDDVDHISKVKTLYNILLNNDKIKNYWNLYYNITTFETVFKYFRDKTGYEPWSLQKLWLRRLASNQSFTMSAPTGLGKTTTLMTYSVFIGQDVVYIVPTKSLMEQVCKRLEKLGAQVSCGKIDQKKVSVITISYLNKNADSIVSLKPNFVVIDDADAVIKSGKTTDRLVSLLGIPKDVYESAIQLIRLRNKYYFSNEYTEEVKEKIRELELKIAEFKDKISQLVIASATIRPKGIKQKALRLLTGFEPSSIQLYARNIIDAYTENLDLSIVKELGSGGLILVSKEYGRSKLNEIKKYVEDLGFNAKLAISGRKFLDDFSQGKVDILVGSASYYGVAVRGIDEPKRLKYVIYYGVPKIRAKLFDALSNPFTLLRVGKLIGIDFSKLQNKILILNPSEVQLLKFSIIKGESINYHKLEQLRQELLYYMSLVKDKLKEKVEDTLISDSFVITKQNGNYYIVYPDMITYLQGSGRASRLYNGGLTLGFSIILVDDRHIFEILEKKMQKLFPNTTFTSLSNTNLSEIKIKLEDSRKEEGNRVHFNISTGLLIVESPTKAKTIAKMFSRPSVRIRNKVPVYETIIVDGNQIYVLDIVASKGHIVDLTLEDIGYYGIKVEDDGTIKPYYDLIKKCLDCNKIFSSASDKCPYCGSANLQSAQTTINLLRELALSVDKVFIASDPDTEGEKIAYDLASFLSPYNSNVYRVVYHEITKKAILEALRNPKKINTNLVMSQIVRRIEDRWIGFTLSNLLKTKFNGHNHGAGRVQTPVLGWIVNKTIKYKSAMGHVVYIDIAGYSIKKYFSEKRKVEEYINNLQVARIEKISEEKILLSPLPPFTTDTLLIEANMKYKLPANLVMKIAQDLFEAGLITYHRTDSTHISSVGIEIAKEYLQKQALIKEFVPRSWESSEEGAHEAIRPTRAIDVNELIQEIEENPYKYSIRFSKLHLLIYDLIFKRFIASQMSHAVGTKSRYLIKLGKDDNVDVELLSNAEGGFIKVYPVKVYNLPVGEIQPKVNITKGSSEQLLSYSDVISLMKSKGIGRPSTYAKTIENLMKHGYIVSSKRKSYLIATNRGISVYQFLSSKFYDLVSESTTSRLMTKLDDIALSKLNASTVLLEIFSEISTLVNPLKSEQNV</sequence>
<dbReference type="EC" id="5.6.2.-" evidence="1 8 9 10"/>
<dbReference type="EMBL" id="AE006641">
    <property type="protein sequence ID" value="AAK41237.1"/>
    <property type="molecule type" value="Genomic_DNA"/>
</dbReference>
<dbReference type="PIR" id="F90247">
    <property type="entry name" value="F90247"/>
</dbReference>
<dbReference type="SMR" id="Q97ZF5"/>
<dbReference type="FunCoup" id="Q97ZF5">
    <property type="interactions" value="1"/>
</dbReference>
<dbReference type="STRING" id="273057.SSO0963"/>
<dbReference type="PaxDb" id="273057-SSO0963"/>
<dbReference type="EnsemblBacteria" id="AAK41237">
    <property type="protein sequence ID" value="AAK41237"/>
    <property type="gene ID" value="SSO0963"/>
</dbReference>
<dbReference type="KEGG" id="sso:SSO0963"/>
<dbReference type="PATRIC" id="fig|273057.12.peg.961"/>
<dbReference type="eggNOG" id="arCOG01526">
    <property type="taxonomic scope" value="Archaea"/>
</dbReference>
<dbReference type="HOGENOM" id="CLU_002886_0_0_2"/>
<dbReference type="InParanoid" id="Q97ZF5"/>
<dbReference type="PhylomeDB" id="Q97ZF5"/>
<dbReference type="Proteomes" id="UP000001974">
    <property type="component" value="Chromosome"/>
</dbReference>
<dbReference type="GO" id="GO:0005737">
    <property type="term" value="C:cytoplasm"/>
    <property type="evidence" value="ECO:0007669"/>
    <property type="project" value="UniProtKB-SubCell"/>
</dbReference>
<dbReference type="GO" id="GO:0005524">
    <property type="term" value="F:ATP binding"/>
    <property type="evidence" value="ECO:0007669"/>
    <property type="project" value="UniProtKB-UniRule"/>
</dbReference>
<dbReference type="GO" id="GO:0016887">
    <property type="term" value="F:ATP hydrolysis activity"/>
    <property type="evidence" value="ECO:0007669"/>
    <property type="project" value="RHEA"/>
</dbReference>
<dbReference type="GO" id="GO:0003677">
    <property type="term" value="F:DNA binding"/>
    <property type="evidence" value="ECO:0007669"/>
    <property type="project" value="UniProtKB-UniRule"/>
</dbReference>
<dbReference type="GO" id="GO:0003918">
    <property type="term" value="F:DNA topoisomerase type II (double strand cut, ATP-hydrolyzing) activity"/>
    <property type="evidence" value="ECO:0007669"/>
    <property type="project" value="UniProtKB-EC"/>
</dbReference>
<dbReference type="GO" id="GO:0160097">
    <property type="term" value="F:reverse gyrase activity"/>
    <property type="evidence" value="ECO:0000314"/>
    <property type="project" value="UniProtKB"/>
</dbReference>
<dbReference type="GO" id="GO:0008270">
    <property type="term" value="F:zinc ion binding"/>
    <property type="evidence" value="ECO:0007669"/>
    <property type="project" value="UniProtKB-UniRule"/>
</dbReference>
<dbReference type="GO" id="GO:0006265">
    <property type="term" value="P:DNA topological change"/>
    <property type="evidence" value="ECO:0000314"/>
    <property type="project" value="UniProtKB"/>
</dbReference>
<dbReference type="CDD" id="cd17924">
    <property type="entry name" value="DDXDc_reverse_gyrase"/>
    <property type="match status" value="1"/>
</dbReference>
<dbReference type="CDD" id="cd18798">
    <property type="entry name" value="SF2_C_reverse_gyrase"/>
    <property type="match status" value="1"/>
</dbReference>
<dbReference type="CDD" id="cd00186">
    <property type="entry name" value="TOP1Ac"/>
    <property type="match status" value="1"/>
</dbReference>
<dbReference type="CDD" id="cd03361">
    <property type="entry name" value="TOPRIM_TopoIA_RevGyr"/>
    <property type="match status" value="1"/>
</dbReference>
<dbReference type="Gene3D" id="2.60.510.20">
    <property type="match status" value="1"/>
</dbReference>
<dbReference type="Gene3D" id="3.40.50.140">
    <property type="match status" value="1"/>
</dbReference>
<dbReference type="Gene3D" id="3.40.50.300">
    <property type="entry name" value="P-loop containing nucleotide triphosphate hydrolases"/>
    <property type="match status" value="3"/>
</dbReference>
<dbReference type="Gene3D" id="1.10.460.10">
    <property type="entry name" value="Topoisomerase I, domain 2"/>
    <property type="match status" value="1"/>
</dbReference>
<dbReference type="Gene3D" id="1.10.290.10">
    <property type="entry name" value="Topoisomerase I, domain 4"/>
    <property type="match status" value="1"/>
</dbReference>
<dbReference type="HAMAP" id="MF_01125">
    <property type="entry name" value="Reverse_gyrase"/>
    <property type="match status" value="1"/>
</dbReference>
<dbReference type="InterPro" id="IPR011545">
    <property type="entry name" value="DEAD/DEAH_box_helicase_dom"/>
</dbReference>
<dbReference type="InterPro" id="IPR014001">
    <property type="entry name" value="Helicase_ATP-bd"/>
</dbReference>
<dbReference type="InterPro" id="IPR027417">
    <property type="entry name" value="P-loop_NTPase"/>
</dbReference>
<dbReference type="InterPro" id="IPR005736">
    <property type="entry name" value="Reverse_gyrase"/>
</dbReference>
<dbReference type="InterPro" id="IPR003601">
    <property type="entry name" value="Topo_IA_2"/>
</dbReference>
<dbReference type="InterPro" id="IPR013497">
    <property type="entry name" value="Topo_IA_cen"/>
</dbReference>
<dbReference type="InterPro" id="IPR013824">
    <property type="entry name" value="Topo_IA_cen_sub1"/>
</dbReference>
<dbReference type="InterPro" id="IPR013826">
    <property type="entry name" value="Topo_IA_cen_sub3"/>
</dbReference>
<dbReference type="InterPro" id="IPR023405">
    <property type="entry name" value="Topo_IA_core_domain"/>
</dbReference>
<dbReference type="InterPro" id="IPR003602">
    <property type="entry name" value="Topo_IA_DNA-bd_dom"/>
</dbReference>
<dbReference type="InterPro" id="IPR006171">
    <property type="entry name" value="TOPRIM_dom"/>
</dbReference>
<dbReference type="InterPro" id="IPR034142">
    <property type="entry name" value="TOPRIM_RevGyr"/>
</dbReference>
<dbReference type="InterPro" id="IPR040569">
    <property type="entry name" value="Znf_Rg"/>
</dbReference>
<dbReference type="NCBIfam" id="TIGR01054">
    <property type="entry name" value="rgy"/>
    <property type="match status" value="1"/>
</dbReference>
<dbReference type="PANTHER" id="PTHR43505">
    <property type="entry name" value="REVERSE GYRASE"/>
    <property type="match status" value="1"/>
</dbReference>
<dbReference type="PANTHER" id="PTHR43505:SF1">
    <property type="entry name" value="REVERSE GYRASE"/>
    <property type="match status" value="1"/>
</dbReference>
<dbReference type="Pfam" id="PF00270">
    <property type="entry name" value="DEAD"/>
    <property type="match status" value="1"/>
</dbReference>
<dbReference type="Pfam" id="PF01131">
    <property type="entry name" value="Topoisom_bac"/>
    <property type="match status" value="1"/>
</dbReference>
<dbReference type="Pfam" id="PF01751">
    <property type="entry name" value="Toprim"/>
    <property type="match status" value="1"/>
</dbReference>
<dbReference type="Pfam" id="PF17915">
    <property type="entry name" value="zf_Rg"/>
    <property type="match status" value="1"/>
</dbReference>
<dbReference type="PRINTS" id="PR00417">
    <property type="entry name" value="PRTPISMRASEI"/>
</dbReference>
<dbReference type="SMART" id="SM00487">
    <property type="entry name" value="DEXDc"/>
    <property type="match status" value="1"/>
</dbReference>
<dbReference type="SMART" id="SM00437">
    <property type="entry name" value="TOP1Ac"/>
    <property type="match status" value="1"/>
</dbReference>
<dbReference type="SMART" id="SM00436">
    <property type="entry name" value="TOP1Bc"/>
    <property type="match status" value="1"/>
</dbReference>
<dbReference type="SMART" id="SM00493">
    <property type="entry name" value="TOPRIM"/>
    <property type="match status" value="1"/>
</dbReference>
<dbReference type="SUPFAM" id="SSF52540">
    <property type="entry name" value="P-loop containing nucleoside triphosphate hydrolases"/>
    <property type="match status" value="2"/>
</dbReference>
<dbReference type="SUPFAM" id="SSF56712">
    <property type="entry name" value="Prokaryotic type I DNA topoisomerase"/>
    <property type="match status" value="1"/>
</dbReference>
<dbReference type="PROSITE" id="PS51192">
    <property type="entry name" value="HELICASE_ATP_BIND_1"/>
    <property type="match status" value="1"/>
</dbReference>
<dbReference type="PROSITE" id="PS52039">
    <property type="entry name" value="TOPO_IA_2"/>
    <property type="match status" value="1"/>
</dbReference>
<dbReference type="PROSITE" id="PS50880">
    <property type="entry name" value="TOPRIM"/>
    <property type="match status" value="1"/>
</dbReference>
<dbReference type="PROSITE" id="PS52037">
    <property type="entry name" value="ZF_RG_C"/>
    <property type="match status" value="1"/>
</dbReference>
<dbReference type="PROSITE" id="PS52036">
    <property type="entry name" value="ZF_RG_N"/>
    <property type="match status" value="1"/>
</dbReference>
<reference key="1">
    <citation type="journal article" date="2001" name="Proc. Natl. Acad. Sci. U.S.A.">
        <title>The complete genome of the crenarchaeon Sulfolobus solfataricus P2.</title>
        <authorList>
            <person name="She Q."/>
            <person name="Singh R.K."/>
            <person name="Confalonieri F."/>
            <person name="Zivanovic Y."/>
            <person name="Allard G."/>
            <person name="Awayez M.J."/>
            <person name="Chan-Weiher C.C.-Y."/>
            <person name="Clausen I.G."/>
            <person name="Curtis B.A."/>
            <person name="De Moors A."/>
            <person name="Erauso G."/>
            <person name="Fletcher C."/>
            <person name="Gordon P.M.K."/>
            <person name="Heikamp-de Jong I."/>
            <person name="Jeffries A.C."/>
            <person name="Kozera C.J."/>
            <person name="Medina N."/>
            <person name="Peng X."/>
            <person name="Thi-Ngoc H.P."/>
            <person name="Redder P."/>
            <person name="Schenk M.E."/>
            <person name="Theriault C."/>
            <person name="Tolstrup N."/>
            <person name="Charlebois R.L."/>
            <person name="Doolittle W.F."/>
            <person name="Duguet M."/>
            <person name="Gaasterland T."/>
            <person name="Garrett R.A."/>
            <person name="Ragan M.A."/>
            <person name="Sensen C.W."/>
            <person name="Van der Oost J."/>
        </authorList>
    </citation>
    <scope>NUCLEOTIDE SEQUENCE [LARGE SCALE GENOMIC DNA]</scope>
    <source>
        <strain>ATCC 35092 / DSM 1617 / JCM 11322 / P2</strain>
    </source>
</reference>
<reference key="2">
    <citation type="journal article" date="2004" name="J. Biol. Chem.">
        <title>Reverse gyrase recruitment to DNA after UV light irradiation in Sulfolobus solfataricus.</title>
        <authorList>
            <person name="Napoli A."/>
            <person name="Valenti A."/>
            <person name="Salerno V."/>
            <person name="Nadal M."/>
            <person name="Garnier F."/>
            <person name="Rossi M."/>
            <person name="Ciaramella M."/>
        </authorList>
    </citation>
    <scope>FUNCTION</scope>
    <scope>CATALYTIC ACTIVITY</scope>
    <scope>REACTION MECHANISM</scope>
    <scope>ACTIVITY REGULATION</scope>
    <scope>SUBCELLULAR LOCATION</scope>
    <source>
        <strain>ATCC 35092 / DSM 1617 / JCM 11322 / P2</strain>
    </source>
</reference>
<reference key="3">
    <citation type="journal article" date="2006" name="Nucleic Acids Res.">
        <title>Selective degradation of reverse gyrase and DNA fragmentation induced by alkylating agent in the archaeon Sulfolobus solfataricus.</title>
        <authorList>
            <person name="Valenti A."/>
            <person name="Napoli A."/>
            <person name="Ferrara M.C."/>
            <person name="Nadal M."/>
            <person name="Rossi M."/>
            <person name="Ciaramella M."/>
        </authorList>
    </citation>
    <scope>FUNCTION</scope>
    <scope>CATALYTIC ACTIVITY</scope>
    <scope>INDUCTION</scope>
    <source>
        <strain>ATCC 35092 / DSM 1617 / JCM 11322 / P2</strain>
    </source>
</reference>
<reference key="4">
    <citation type="journal article" date="2008" name="J. Virol.">
        <title>Transcriptome analysis of infection of the archaeon Sulfolobus solfataricus with Sulfolobus turreted icosahedral virus.</title>
        <authorList>
            <person name="Ortmann A.C."/>
            <person name="Brumfield S.K."/>
            <person name="Walther J."/>
            <person name="McInnerney K."/>
            <person name="Brouns S.J."/>
            <person name="van de Werken H.J."/>
            <person name="Bothner B."/>
            <person name="Douglas T."/>
            <person name="van de Oost J."/>
            <person name="Young M.J."/>
        </authorList>
    </citation>
    <scope>INDUCTION BY VIRUS (MICROBIAL INFECTION)</scope>
    <source>
        <strain>2-2-12</strain>
    </source>
</reference>
<reference key="5">
    <citation type="journal article" date="2008" name="Extremophiles">
        <title>Transcriptional analysis of the two reverse gyrase encoding genes of Sulfolobus solfataricus P2 in relation to the growth phases and temperature conditions.</title>
        <authorList>
            <person name="Garnier F."/>
            <person name="Nadal M."/>
        </authorList>
    </citation>
    <scope>INDUCTION</scope>
    <source>
        <strain>ATCC 35092 / DSM 1617 / JCM 11322 / P2</strain>
    </source>
</reference>
<reference key="6">
    <citation type="journal article" date="2011" name="J. Mol. Biol.">
        <title>TopR2, the second reverse gyrase of Sulfolobus solfataricus, exhibits unusual properties.</title>
        <authorList>
            <person name="Bizard A."/>
            <person name="Garnier F."/>
            <person name="Nadal M."/>
        </authorList>
    </citation>
    <scope>FUNCTION</scope>
    <scope>CATALYTIC ACTIVITY</scope>
    <scope>REACTION MECHANISM</scope>
    <scope>COFACTOR</scope>
    <scope>ACTIVITY REGULATION</scope>
    <scope>BIOPHYSICOCHEMICAL PROPERTIES</scope>
</reference>
<reference key="7">
    <citation type="journal article" date="2020" name="Mol. Microbiol.">
        <title>The reverse gyrase TopR1 is responsible for the homeostatic control of DNA supercoiling in the hyperthermophilic archaeon Sulfolobus solfataricus.</title>
        <authorList>
            <person name="Couturier M."/>
            <person name="Gadelle D."/>
            <person name="Forterre P."/>
            <person name="Nadal M."/>
            <person name="Garnier F."/>
        </authorList>
    </citation>
    <scope>FUNCTION</scope>
    <scope>CATALYTIC ACTIVITY</scope>
    <scope>PROTEIN ABUNDANCE</scope>
    <scope>BIOPHYSICOCHEMICAL PROPERTIES</scope>
    <scope>INDUCTION</scope>
    <source>
        <strain>ATCC 35092 / DSM 1617 / JCM 11322 / P2</strain>
    </source>
</reference>
<reference key="8">
    <citation type="journal article" date="2020" name="Proc. Natl. Acad. Sci. U.S.A.">
        <title>Direct observation of helicase-topoisomerase coupling within reverse gyrase.</title>
        <authorList>
            <person name="Yang X."/>
            <person name="Garnier F."/>
            <person name="Debat H."/>
            <person name="Strick T.R."/>
            <person name="Nadal M."/>
        </authorList>
    </citation>
    <scope>FUNCTION</scope>
    <scope>REACTION MECHANISM</scope>
    <scope>CATALYTIC ACTIVITY</scope>
    <scope>ACTIVE SITE</scope>
    <scope>BIOPHYSICOCHEMICAL PROPERTIES</scope>
    <scope>SUBUNIT</scope>
    <scope>DNA-BINDING</scope>
    <scope>MUTAGENESIS OF TYR-903</scope>
</reference>
<comment type="function">
    <text evidence="6 8 9 10 18 19 20">Modifies the topological state of DNA by introducing positive supercoils in an ATP-dependent process (Probable) (PubMed:15190074, PubMed:16617150, PubMed:18337566, PubMed:31713907, PubMed:32371489). A highly processive enzyme, it introduces a large number of positive supercoils directly in a negatively supercoiled substrate (PubMed:21435345). At 75 degrees Celsius introduces more than 23 positive supercoils into pTZ18R DNA (probably 2860 bp), more than TopR1; unlike TopR1 little to no relaxation of the negatively supercoiled substrate is seen in the presence of ATP, in the absence of ATP no activity is seen (PubMed:21435345). At 45 degrees Celsius the enzyme is slower and in vitro individual steps can be detected (PubMed:32371489). It cleaves transiently a single DNA strand and remains covalently bound to the 5' DNA end through a tyrosine residue (Probable) (PubMed:32371489). May be involved in DNA damage response (Probable) (PubMed:15190074). May be involved in rewinding the DNA strands in the regions of the chromosome that have opened up to allow transcription or replication.</text>
</comment>
<comment type="function">
    <text evidence="9 18 19">There are 2 genes for this protein in the cell. During exponential growth this is the more highly expressed isoform (about 125 molecules per cell at 80 degrees Celsius, about 117 molecules at 88 degrees Celsius); this isoform is less active at higher temperature (PubMed:31713907). Grows actively at both 80 and 88 degrees Celsius; survives a long exposure at 45 degrees Celsius without DNA replication or cell division occurring (PubMed:31713907). Experiments using whole cell extracts do not distinguish which isoform is present, the results are probably a mixture of the two forms (Probable) (PubMed:15190074, PubMed:16617150).</text>
</comment>
<comment type="catalytic activity">
    <reaction evidence="1">
        <text>ATP + H2O = ADP + phosphate + H(+)</text>
        <dbReference type="Rhea" id="RHEA:13065"/>
        <dbReference type="ChEBI" id="CHEBI:15377"/>
        <dbReference type="ChEBI" id="CHEBI:15378"/>
        <dbReference type="ChEBI" id="CHEBI:30616"/>
        <dbReference type="ChEBI" id="CHEBI:43474"/>
        <dbReference type="ChEBI" id="CHEBI:456216"/>
    </reaction>
</comment>
<comment type="cofactor">
    <cofactor evidence="1">
        <name>Zn(2+)</name>
        <dbReference type="ChEBI" id="CHEBI:29105"/>
    </cofactor>
    <text evidence="1">Binds 2 zinc ions per subunit.</text>
</comment>
<comment type="cofactor">
    <cofactor evidence="1 8">
        <name>Mg(2+)</name>
        <dbReference type="ChEBI" id="CHEBI:18420"/>
    </cofactor>
</comment>
<comment type="activity regulation">
    <text evidence="8 18">At least one of the 2 proteins is inhibited by actinomycin D (Probable) (PubMed:15190074). Less sensitive to NaCl than TopR1, maximal positive supercoiling is observed with 100 mM NaCl; as NaCl rises higher than 400 mM supercoiling decreases (PubMed:21435345). At 600 mM NaCl relaxes but does not introduce positive supercoils into negatively supercoiled substrate (PubMed:21435345).</text>
</comment>
<comment type="biophysicochemical properties">
    <kinetics>
        <KM evidence="10">1 uM for ATP with negatively supercoiled DNA substrate at 45 degrees Celsius</KM>
        <KM evidence="10">7.1 uM for ATP with positively supercoiled DNA substrate at 45 degrees Celsius</KM>
    </kinetics>
    <temperatureDependence>
        <text evidence="8 9">Optimum temperature is 70-75 degrees Celsius, between 60 and 80 degrees Celsius high levels of positive supercoils are seen in vitro (PubMed:21435345). Active at 80 degrees, much less active at 88 degrees Celsius in vitro (PubMed:31713907).</text>
    </temperatureDependence>
</comment>
<comment type="subunit">
    <text evidence="1 10">Monomer.</text>
</comment>
<comment type="subcellular location">
    <subcellularLocation>
        <location evidence="1 18">Cytoplasm</location>
    </subcellularLocation>
    <text evidence="18">Upon UV irradiation up to 60% of the reverse gyrase activity becomes associated with DNA in vivo (PubMed:15190074).</text>
</comment>
<comment type="induction">
    <text evidence="5 7 9 19">No change in protein levels during shifts from 80 to 88 or 88 to 80 degrees Celsius (at protein level) (PubMed:31713907). Constitutively transcribed during cell growth; no change is seen in the presence of methyl methanesulfonate (MMS) (PubMed:16617150). 0.7 mM MMS reduces the amount of enzyme at a post-translational level via a metalloprotease (at protein level) (Probable) (PubMed:16617150). At 72 degrees Celsius this gene is transcribed at low levels during early and late exponential growth (until about 50 hours), declines as stationary phase starts, transcripts never disappear completely (PubMed:18777006). At 80 degrees Celsius more transcripts accumulate with maximal levels at about 70 hours, declines more rapidly than at 72 degrees (PubMed:18777006). No change in transcript levels is seen when cells shift from 72 to 80, or 80 to 72 degrees Celsius (PubMed:18777006).</text>
</comment>
<comment type="induction">
    <text evidence="6">(Microbial infection) This isoform is induced at least 4-fold following infection by Sulfolobus turreted icosahedral virus 1 (STIV-1) in strain 2-2-12 (PubMed:18337566).</text>
</comment>
<comment type="domain">
    <text evidence="1">Both the DNA unwinding and positive supercoiling activities require the cooperation of both domains. The cooperative action between the helicase-like and the topoisomerase domains is specific. The helicase-like domain probably does not directly unwind DNA but acts more likely by driving ATP-dependent conformational changes within the whole enzyme, functioning more like a protein motor. The 'latch' region of the N-terminal domain plays a regulatory role in the enzyme, repressing topoisomerase activity in the absence of ATP and therefore preventing the enzyme from acting as an ATP-independent relaxing enzyme; it also helps to coordinate nucleotide hydrolysis by the ATPase domain with the supercoiling activity of the topoisomerase domain.</text>
</comment>
<comment type="miscellaneous">
    <text evidence="1">This enzyme is the only unique feature of hyperthermophilic bacteria/archaea known and seems to be essential for adaptation to life at high temperatures. It may play a role in stabilization of DNA at high temperatures.</text>
</comment>
<comment type="miscellaneous">
    <text evidence="6">Strain 2-2-12 is a substrain of P2 that is highly susceptible to infection by Sulfolobus turreted icosahedral virus 1 (STIV-1).</text>
</comment>
<comment type="similarity">
    <text evidence="1">In the N-terminal section; belongs to the DEAD box helicase family. DDVD subfamily.</text>
</comment>
<comment type="similarity">
    <text evidence="1">In the C-terminal section; belongs to the type IA topoisomerase family.</text>
</comment>
<comment type="caution">
    <text evidence="17">Ala-192 is present instead of the conserved Val which is part of the DDVD box.</text>
</comment>